<evidence type="ECO:0000250" key="1">
    <source>
        <dbReference type="UniProtKB" id="P04190"/>
    </source>
</evidence>
<evidence type="ECO:0000250" key="2">
    <source>
        <dbReference type="UniProtKB" id="P25910"/>
    </source>
</evidence>
<evidence type="ECO:0000255" key="3"/>
<evidence type="ECO:0000269" key="4">
    <source>
    </source>
</evidence>
<evidence type="ECO:0000269" key="5">
    <source>
    </source>
</evidence>
<evidence type="ECO:0000269" key="6">
    <source>
    </source>
</evidence>
<evidence type="ECO:0000303" key="7">
    <source>
    </source>
</evidence>
<evidence type="ECO:0000305" key="8"/>
<evidence type="ECO:0000305" key="9">
    <source>
    </source>
</evidence>
<evidence type="ECO:0007829" key="10">
    <source>
        <dbReference type="PDB" id="6DJA"/>
    </source>
</evidence>
<reference key="1">
    <citation type="journal article" date="1988" name="J. Bacteriol.">
        <title>Cloning, nucleotide sequence, and expression of the Bacillus cereus 5/B/6 beta-lactamase II structural gene.</title>
        <authorList>
            <person name="Lim H.M."/>
            <person name="Pene J.J."/>
            <person name="Shaw R.W."/>
        </authorList>
    </citation>
    <scope>NUCLEOTIDE SEQUENCE [GENOMIC DNA]</scope>
    <scope>FUNCTION</scope>
    <scope>ACTIVITY REGULATION</scope>
    <scope>BIOPHYSICOCHEMICAL PROPERTIES</scope>
    <scope>SUBSTRATE SPECIFICITY</scope>
    <source>
        <strain>5/B/6</strain>
    </source>
</reference>
<reference key="2">
    <citation type="journal article" date="1989" name="J. Biol. Chem.">
        <title>Mutations affecting the catalytic activity of Bacillus cereus 5/B/6 beta-lactamase II.</title>
        <authorList>
            <person name="Lim H.M."/>
            <person name="Pene J.J."/>
        </authorList>
    </citation>
    <scope>FUNCTION</scope>
    <scope>MUTAGENESIS OF HIS-57; GLU-66; HIS-117; GLY-177 AND GLU-241</scope>
    <scope>SUBSTRATE SPECIFICITY</scope>
</reference>
<reference key="3">
    <citation type="journal article" date="1991" name="Biochem. J.">
        <title>Site-directed mutagenesis of dicarboxylic acids near the active site of Bacillus cereus 5/B/6 beta-lactamase II.</title>
        <authorList>
            <person name="Lim H.M."/>
            <person name="Iyer R.K."/>
            <person name="Pene J.J."/>
        </authorList>
    </citation>
    <scope>FUNCTION</scope>
    <scope>MUTAGENESIS OF ASP-110 AND ASP-119</scope>
</reference>
<proteinExistence type="evidence at protein level"/>
<sequence>MKNTLLKLGVCVSLLGITPFVSTISSVQAERTVEHKVIKNETGTISISQLNKNVWVHTELGYFSGEAVPSNGLVLNTSKGLVLVDSSWDDKLTKELIEMVEKKFKKRVTDVIITHAHADRIGGMKTLKERGIKAHSTALTAELAKKNGYEEPLGDLQSVTNLKFGNMKVETFYPGKGHTEDNIVVWLPQYQILAGGCLVKSASSKDLGNVADAYVNEWSTSIENVLKRYGNINLVVPGHGEVGDRGLLLHTLDLLK</sequence>
<comment type="function">
    <text evidence="4 5 6">Confers resistance to the different beta-lactams antibiotics (penicillin, cephalosporin and carbapenem) via the hydrolysis of the beta-lactam ring. Benzylpenicillin is a better substrate than cephalosporin C and ampicillin (PubMed:2501295, PubMed:3131315).</text>
</comment>
<comment type="catalytic activity">
    <reaction evidence="2">
        <text>a beta-lactam + H2O = a substituted beta-amino acid</text>
        <dbReference type="Rhea" id="RHEA:20401"/>
        <dbReference type="ChEBI" id="CHEBI:15377"/>
        <dbReference type="ChEBI" id="CHEBI:35627"/>
        <dbReference type="ChEBI" id="CHEBI:140347"/>
        <dbReference type="EC" id="3.5.2.6"/>
    </reaction>
</comment>
<comment type="cofactor">
    <cofactor evidence="1">
        <name>Zn(2+)</name>
        <dbReference type="ChEBI" id="CHEBI:29105"/>
    </cofactor>
    <text evidence="1">Binds 2 Zn(2+) ions per subunit.</text>
</comment>
<comment type="activity regulation">
    <text evidence="6">Inhibited by chelating agents such as EDTA.</text>
</comment>
<comment type="biophysicochemical properties">
    <temperatureDependence>
        <text evidence="6">Thermostable.</text>
    </temperatureDependence>
</comment>
<comment type="subunit">
    <text evidence="1">Monomer.</text>
</comment>
<comment type="subcellular location">
    <subcellularLocation>
        <location evidence="8">Periplasm</location>
    </subcellularLocation>
</comment>
<comment type="similarity">
    <text evidence="8">Belongs to the metallo-beta-lactamase superfamily. Class-B beta-lactamase family.</text>
</comment>
<keyword id="KW-0002">3D-structure</keyword>
<keyword id="KW-0046">Antibiotic resistance</keyword>
<keyword id="KW-0378">Hydrolase</keyword>
<keyword id="KW-0479">Metal-binding</keyword>
<keyword id="KW-0574">Periplasm</keyword>
<keyword id="KW-0732">Signal</keyword>
<keyword id="KW-0862">Zinc</keyword>
<organism>
    <name type="scientific">Bacillus cereus</name>
    <dbReference type="NCBI Taxonomy" id="1396"/>
    <lineage>
        <taxon>Bacteria</taxon>
        <taxon>Bacillati</taxon>
        <taxon>Bacillota</taxon>
        <taxon>Bacilli</taxon>
        <taxon>Bacillales</taxon>
        <taxon>Bacillaceae</taxon>
        <taxon>Bacillus</taxon>
        <taxon>Bacillus cereus group</taxon>
    </lineage>
</organism>
<dbReference type="EC" id="3.5.2.6" evidence="2"/>
<dbReference type="EMBL" id="M19530">
    <property type="protein sequence ID" value="AAA22562.1"/>
    <property type="molecule type" value="Genomic_DNA"/>
</dbReference>
<dbReference type="PIR" id="A32017">
    <property type="entry name" value="A32017"/>
</dbReference>
<dbReference type="RefSeq" id="WP_000799232.1">
    <property type="nucleotide sequence ID" value="NG_055630.1"/>
</dbReference>
<dbReference type="PDB" id="6DJA">
    <property type="method" value="X-ray"/>
    <property type="resolution" value="2.48 A"/>
    <property type="chains" value="A=35-256"/>
</dbReference>
<dbReference type="PDBsum" id="6DJA"/>
<dbReference type="SMR" id="P14488"/>
<dbReference type="BindingDB" id="P14488"/>
<dbReference type="ChEMBL" id="CHEMBL1744488"/>
<dbReference type="CARD" id="ARO:3002878">
    <property type="molecule name" value="BcII"/>
    <property type="mechanism identifier" value="ARO:0001004"/>
    <property type="mechanism name" value="antibiotic inactivation"/>
</dbReference>
<dbReference type="GeneID" id="75086510"/>
<dbReference type="PATRIC" id="fig|1396.421.peg.2543"/>
<dbReference type="eggNOG" id="COG0491">
    <property type="taxonomic scope" value="Bacteria"/>
</dbReference>
<dbReference type="OMA" id="THWHADR"/>
<dbReference type="SABIO-RK" id="P14488"/>
<dbReference type="GO" id="GO:0042597">
    <property type="term" value="C:periplasmic space"/>
    <property type="evidence" value="ECO:0007669"/>
    <property type="project" value="UniProtKB-SubCell"/>
</dbReference>
<dbReference type="GO" id="GO:0008800">
    <property type="term" value="F:beta-lactamase activity"/>
    <property type="evidence" value="ECO:0000250"/>
    <property type="project" value="UniProtKB"/>
</dbReference>
<dbReference type="GO" id="GO:0008270">
    <property type="term" value="F:zinc ion binding"/>
    <property type="evidence" value="ECO:0000250"/>
    <property type="project" value="UniProtKB"/>
</dbReference>
<dbReference type="GO" id="GO:0017001">
    <property type="term" value="P:antibiotic catabolic process"/>
    <property type="evidence" value="ECO:0000315"/>
    <property type="project" value="UniProtKB"/>
</dbReference>
<dbReference type="GO" id="GO:0046677">
    <property type="term" value="P:response to antibiotic"/>
    <property type="evidence" value="ECO:0007669"/>
    <property type="project" value="UniProtKB-KW"/>
</dbReference>
<dbReference type="CDD" id="cd16304">
    <property type="entry name" value="BcII-like_MBL-B1"/>
    <property type="match status" value="1"/>
</dbReference>
<dbReference type="FunFam" id="3.60.15.10:FF:000050">
    <property type="entry name" value="Metallo-beta-lactamase type 2"/>
    <property type="match status" value="1"/>
</dbReference>
<dbReference type="Gene3D" id="3.60.15.10">
    <property type="entry name" value="Ribonuclease Z/Hydroxyacylglutathione hydrolase-like"/>
    <property type="match status" value="1"/>
</dbReference>
<dbReference type="InterPro" id="IPR047917">
    <property type="entry name" value="BcII-like_MBL-B1"/>
</dbReference>
<dbReference type="InterPro" id="IPR001018">
    <property type="entry name" value="Beta-lactamase_class-B_CS"/>
</dbReference>
<dbReference type="InterPro" id="IPR001279">
    <property type="entry name" value="Metallo-B-lactamas"/>
</dbReference>
<dbReference type="InterPro" id="IPR050855">
    <property type="entry name" value="NDM-1-like"/>
</dbReference>
<dbReference type="InterPro" id="IPR036866">
    <property type="entry name" value="RibonucZ/Hydroxyglut_hydro"/>
</dbReference>
<dbReference type="NCBIfam" id="NF033095">
    <property type="entry name" value="bla_Bc_2"/>
    <property type="match status" value="1"/>
</dbReference>
<dbReference type="NCBIfam" id="NF012229">
    <property type="entry name" value="bla_class_B_core"/>
    <property type="match status" value="1"/>
</dbReference>
<dbReference type="NCBIfam" id="NF033088">
    <property type="entry name" value="bla_subclass_B1"/>
    <property type="match status" value="1"/>
</dbReference>
<dbReference type="PANTHER" id="PTHR42951:SF4">
    <property type="entry name" value="ACYL-COENZYME A THIOESTERASE MBLAC2"/>
    <property type="match status" value="1"/>
</dbReference>
<dbReference type="PANTHER" id="PTHR42951">
    <property type="entry name" value="METALLO-BETA-LACTAMASE DOMAIN-CONTAINING"/>
    <property type="match status" value="1"/>
</dbReference>
<dbReference type="Pfam" id="PF00753">
    <property type="entry name" value="Lactamase_B"/>
    <property type="match status" value="1"/>
</dbReference>
<dbReference type="SMART" id="SM00849">
    <property type="entry name" value="Lactamase_B"/>
    <property type="match status" value="1"/>
</dbReference>
<dbReference type="SUPFAM" id="SSF56281">
    <property type="entry name" value="Metallo-hydrolase/oxidoreductase"/>
    <property type="match status" value="1"/>
</dbReference>
<dbReference type="PROSITE" id="PS00743">
    <property type="entry name" value="BETA_LACTAMASE_B_1"/>
    <property type="match status" value="1"/>
</dbReference>
<dbReference type="PROSITE" id="PS00744">
    <property type="entry name" value="BETA_LACTAMASE_B_2"/>
    <property type="match status" value="1"/>
</dbReference>
<name>BLAB_BACCE</name>
<accession>P14488</accession>
<feature type="signal peptide" evidence="3 9">
    <location>
        <begin position="1"/>
        <end position="29"/>
    </location>
</feature>
<feature type="chain" id="PRO_0000016943" description="Metallo-beta-lactamase type 2">
    <location>
        <begin position="30"/>
        <end position="256"/>
    </location>
</feature>
<feature type="binding site" evidence="1">
    <location>
        <position position="115"/>
    </location>
    <ligand>
        <name>Zn(2+)</name>
        <dbReference type="ChEBI" id="CHEBI:29105"/>
        <label>1</label>
    </ligand>
</feature>
<feature type="binding site" evidence="1">
    <location>
        <position position="117"/>
    </location>
    <ligand>
        <name>Zn(2+)</name>
        <dbReference type="ChEBI" id="CHEBI:29105"/>
        <label>1</label>
    </ligand>
</feature>
<feature type="binding site" evidence="1">
    <location>
        <position position="119"/>
    </location>
    <ligand>
        <name>Zn(2+)</name>
        <dbReference type="ChEBI" id="CHEBI:29105"/>
        <label>2</label>
    </ligand>
</feature>
<feature type="binding site" evidence="1">
    <location>
        <position position="178"/>
    </location>
    <ligand>
        <name>Zn(2+)</name>
        <dbReference type="ChEBI" id="CHEBI:29105"/>
        <label>1</label>
    </ligand>
</feature>
<feature type="binding site" evidence="1">
    <location>
        <position position="197"/>
    </location>
    <ligand>
        <name>Zn(2+)</name>
        <dbReference type="ChEBI" id="CHEBI:29105"/>
        <label>2</label>
    </ligand>
</feature>
<feature type="binding site" evidence="1">
    <location>
        <position position="200"/>
    </location>
    <ligand>
        <name>substrate</name>
    </ligand>
</feature>
<feature type="binding site" evidence="1">
    <location>
        <position position="209"/>
    </location>
    <ligand>
        <name>substrate</name>
    </ligand>
</feature>
<feature type="binding site" evidence="1">
    <location>
        <position position="239"/>
    </location>
    <ligand>
        <name>Zn(2+)</name>
        <dbReference type="ChEBI" id="CHEBI:29105"/>
        <label>2</label>
    </ligand>
</feature>
<feature type="mutagenesis site" description="Inactivates the enzyme." evidence="5">
    <original>H</original>
    <variation>Y</variation>
    <location>
        <position position="57"/>
    </location>
</feature>
<feature type="mutagenesis site" description="No change in activity." evidence="5">
    <original>E</original>
    <variation>Q</variation>
    <location>
        <position position="66"/>
    </location>
</feature>
<feature type="mutagenesis site" description="No change in activity." evidence="4">
    <original>D</original>
    <variation>N</variation>
    <location>
        <position position="110"/>
    </location>
</feature>
<feature type="mutagenesis site" description="Inactivates the enzyme." evidence="5">
    <original>H</original>
    <variation>Y</variation>
    <location>
        <position position="117"/>
    </location>
</feature>
<feature type="mutagenesis site" description="Inactivates the enzyme." evidence="4">
    <original>D</original>
    <variation>N</variation>
    <variation>E</variation>
    <location>
        <position position="119"/>
    </location>
</feature>
<feature type="mutagenesis site" description="Inactivates the enzyme." evidence="5">
    <original>G</original>
    <variation>E</variation>
    <location>
        <position position="177"/>
    </location>
</feature>
<feature type="mutagenesis site" description="No change in activity." evidence="5">
    <original>E</original>
    <variation>Q</variation>
    <location>
        <position position="241"/>
    </location>
</feature>
<feature type="strand" evidence="10">
    <location>
        <begin position="37"/>
        <end position="39"/>
    </location>
</feature>
<feature type="strand" evidence="10">
    <location>
        <begin position="41"/>
        <end position="51"/>
    </location>
</feature>
<feature type="strand" evidence="10">
    <location>
        <begin position="54"/>
        <end position="63"/>
    </location>
</feature>
<feature type="strand" evidence="10">
    <location>
        <begin position="66"/>
        <end position="77"/>
    </location>
</feature>
<feature type="strand" evidence="10">
    <location>
        <begin position="80"/>
        <end position="84"/>
    </location>
</feature>
<feature type="helix" evidence="10">
    <location>
        <begin position="90"/>
        <end position="104"/>
    </location>
</feature>
<feature type="strand" evidence="10">
    <location>
        <begin position="108"/>
        <end position="112"/>
    </location>
</feature>
<feature type="strand" evidence="10">
    <location>
        <begin position="115"/>
        <end position="117"/>
    </location>
</feature>
<feature type="helix" evidence="10">
    <location>
        <begin position="118"/>
        <end position="121"/>
    </location>
</feature>
<feature type="helix" evidence="10">
    <location>
        <begin position="124"/>
        <end position="129"/>
    </location>
</feature>
<feature type="strand" evidence="10">
    <location>
        <begin position="133"/>
        <end position="135"/>
    </location>
</feature>
<feature type="helix" evidence="10">
    <location>
        <begin position="138"/>
        <end position="146"/>
    </location>
</feature>
<feature type="strand" evidence="10">
    <location>
        <begin position="158"/>
        <end position="164"/>
    </location>
</feature>
<feature type="strand" evidence="10">
    <location>
        <begin position="167"/>
        <end position="172"/>
    </location>
</feature>
<feature type="strand" evidence="10">
    <location>
        <begin position="176"/>
        <end position="181"/>
    </location>
</feature>
<feature type="strand" evidence="10">
    <location>
        <begin position="184"/>
        <end position="187"/>
    </location>
</feature>
<feature type="turn" evidence="10">
    <location>
        <begin position="188"/>
        <end position="191"/>
    </location>
</feature>
<feature type="strand" evidence="10">
    <location>
        <begin position="192"/>
        <end position="196"/>
    </location>
</feature>
<feature type="turn" evidence="10">
    <location>
        <begin position="215"/>
        <end position="217"/>
    </location>
</feature>
<feature type="helix" evidence="10">
    <location>
        <begin position="218"/>
        <end position="228"/>
    </location>
</feature>
<feature type="strand" evidence="10">
    <location>
        <begin position="233"/>
        <end position="240"/>
    </location>
</feature>
<feature type="helix" evidence="10">
    <location>
        <begin position="246"/>
        <end position="255"/>
    </location>
</feature>
<protein>
    <recommendedName>
        <fullName evidence="8">Metallo-beta-lactamase type 2</fullName>
        <ecNumber evidence="2">3.5.2.6</ecNumber>
    </recommendedName>
    <alternativeName>
        <fullName evidence="8">B2 metallo-beta-lactamase</fullName>
    </alternativeName>
    <alternativeName>
        <fullName evidence="7">Beta-lactamase II</fullName>
    </alternativeName>
    <alternativeName>
        <fullName evidence="1">Cephalosporinase</fullName>
    </alternativeName>
    <alternativeName>
        <fullName evidence="7">Metallo-beta-lactamase type II</fullName>
    </alternativeName>
    <alternativeName>
        <fullName evidence="7">Metallothioprotein beta-lactamase II</fullName>
    </alternativeName>
    <alternativeName>
        <fullName evidence="1">Penicillinase</fullName>
    </alternativeName>
    <alternativeName>
        <fullName evidence="7">Zinc-requiring beta-lactamase II</fullName>
    </alternativeName>
</protein>